<reference key="1">
    <citation type="journal article" date="1997" name="Mol. Reprod. Dev.">
        <title>Sequence and characterization of the sperm protein Sp17 from the baboon.</title>
        <authorList>
            <person name="Adoyo P.A."/>
            <person name="Lea I.A."/>
            <person name="Richardson R.T."/>
            <person name="Widgren E.E."/>
            <person name="O'Rand M.G."/>
        </authorList>
    </citation>
    <scope>NUCLEOTIDE SEQUENCE [MRNA]</scope>
    <source>
        <tissue>Testis</tissue>
    </source>
</reference>
<name>SP17_PAPHA</name>
<protein>
    <recommendedName>
        <fullName>Sperm surface protein Sp17</fullName>
    </recommendedName>
    <alternativeName>
        <fullName>Sperm autoantigenic protein 17</fullName>
    </alternativeName>
</protein>
<accession>Q95230</accession>
<sequence>MSIPFSNTHYRIPQGFGNLLEGLTREILREQPDNIPAFAAAYFESLLEKREKTNFDPAEWGSKVEDRFYNNHAFEEQEPPEKSDPKQEESQVSGKEEETSVTILDSSEEDKEKEEVAAVKIQAAFRGHVAREEVKKMKTDSLQNEEKEENSEDTGFTSRTHEK</sequence>
<gene>
    <name type="primary">SPA17</name>
    <name type="synonym">SP17</name>
</gene>
<organism>
    <name type="scientific">Papio hamadryas</name>
    <name type="common">Hamadryas baboon</name>
    <dbReference type="NCBI Taxonomy" id="9557"/>
    <lineage>
        <taxon>Eukaryota</taxon>
        <taxon>Metazoa</taxon>
        <taxon>Chordata</taxon>
        <taxon>Craniata</taxon>
        <taxon>Vertebrata</taxon>
        <taxon>Euteleostomi</taxon>
        <taxon>Mammalia</taxon>
        <taxon>Eutheria</taxon>
        <taxon>Euarchontoglires</taxon>
        <taxon>Primates</taxon>
        <taxon>Haplorrhini</taxon>
        <taxon>Catarrhini</taxon>
        <taxon>Cercopithecidae</taxon>
        <taxon>Cercopithecinae</taxon>
        <taxon>Papio</taxon>
    </lineage>
</organism>
<keyword id="KW-0472">Membrane</keyword>
<dbReference type="EMBL" id="U75209">
    <property type="protein sequence ID" value="AAB38534.1"/>
    <property type="molecule type" value="mRNA"/>
</dbReference>
<dbReference type="SMR" id="Q95230"/>
<dbReference type="GO" id="GO:0016020">
    <property type="term" value="C:membrane"/>
    <property type="evidence" value="ECO:0007669"/>
    <property type="project" value="UniProtKB-SubCell"/>
</dbReference>
<dbReference type="GO" id="GO:0005516">
    <property type="term" value="F:calmodulin binding"/>
    <property type="evidence" value="ECO:0007669"/>
    <property type="project" value="TreeGrafter"/>
</dbReference>
<dbReference type="GO" id="GO:0007339">
    <property type="term" value="P:binding of sperm to zona pellucida"/>
    <property type="evidence" value="ECO:0007669"/>
    <property type="project" value="InterPro"/>
</dbReference>
<dbReference type="CDD" id="cd12100">
    <property type="entry name" value="DD_CABYR_SP17"/>
    <property type="match status" value="1"/>
</dbReference>
<dbReference type="CDD" id="cd23767">
    <property type="entry name" value="IQCD"/>
    <property type="match status" value="1"/>
</dbReference>
<dbReference type="FunFam" id="1.20.5.190:FF:000045">
    <property type="entry name" value="Sperm surface protein Sp17"/>
    <property type="match status" value="1"/>
</dbReference>
<dbReference type="FunFam" id="1.20.890.10:FF:000006">
    <property type="entry name" value="Sperm surface protein Sp17"/>
    <property type="match status" value="1"/>
</dbReference>
<dbReference type="Gene3D" id="1.20.5.190">
    <property type="match status" value="1"/>
</dbReference>
<dbReference type="Gene3D" id="1.20.890.10">
    <property type="entry name" value="cAMP-dependent protein kinase regulatory subunit, dimerization-anchoring domain"/>
    <property type="match status" value="1"/>
</dbReference>
<dbReference type="InterPro" id="IPR003117">
    <property type="entry name" value="cAMP_dep_PK_reg_su_I/II_a/b"/>
</dbReference>
<dbReference type="InterPro" id="IPR047579">
    <property type="entry name" value="DD_CABYR_SP17"/>
</dbReference>
<dbReference type="InterPro" id="IPR000048">
    <property type="entry name" value="IQ_motif_EF-hand-BS"/>
</dbReference>
<dbReference type="InterPro" id="IPR012105">
    <property type="entry name" value="Sp17"/>
</dbReference>
<dbReference type="PANTHER" id="PTHR10699:SF11">
    <property type="entry name" value="IGLOO, ISOFORM A"/>
    <property type="match status" value="1"/>
</dbReference>
<dbReference type="PANTHER" id="PTHR10699">
    <property type="entry name" value="NEUROMODULIN"/>
    <property type="match status" value="1"/>
</dbReference>
<dbReference type="Pfam" id="PF00612">
    <property type="entry name" value="IQ"/>
    <property type="match status" value="1"/>
</dbReference>
<dbReference type="Pfam" id="PF02197">
    <property type="entry name" value="RIIa"/>
    <property type="match status" value="1"/>
</dbReference>
<dbReference type="PIRSF" id="PIRSF016533">
    <property type="entry name" value="Sp17"/>
    <property type="match status" value="1"/>
</dbReference>
<dbReference type="SMART" id="SM00015">
    <property type="entry name" value="IQ"/>
    <property type="match status" value="1"/>
</dbReference>
<dbReference type="SMART" id="SM00394">
    <property type="entry name" value="RIIa"/>
    <property type="match status" value="1"/>
</dbReference>
<dbReference type="SUPFAM" id="SSF47391">
    <property type="entry name" value="Dimerization-anchoring domain of cAMP-dependent PK regulatory subunit"/>
    <property type="match status" value="1"/>
</dbReference>
<dbReference type="PROSITE" id="PS50096">
    <property type="entry name" value="IQ"/>
    <property type="match status" value="1"/>
</dbReference>
<evidence type="ECO:0000250" key="1"/>
<evidence type="ECO:0000255" key="2">
    <source>
        <dbReference type="PROSITE-ProRule" id="PRU00116"/>
    </source>
</evidence>
<evidence type="ECO:0000256" key="3">
    <source>
        <dbReference type="SAM" id="MobiDB-lite"/>
    </source>
</evidence>
<evidence type="ECO:0000305" key="4"/>
<proteinExistence type="evidence at transcript level"/>
<comment type="function">
    <text evidence="1">Sperm surface zona pellucida binding protein. Helps to bind spermatozoa to the zona pellucida with high affinity. Might function in binding zona pellucida and carbohydrates (By similarity).</text>
</comment>
<comment type="subunit">
    <text evidence="1">Homodimer. May interact with ROPN1 (By similarity).</text>
</comment>
<comment type="subcellular location">
    <subcellularLocation>
        <location evidence="4">Membrane</location>
        <topology evidence="4">Peripheral membrane protein</topology>
    </subcellularLocation>
</comment>
<comment type="tissue specificity">
    <text>Testis- and sperm-specific.</text>
</comment>
<feature type="chain" id="PRO_0000181345" description="Sperm surface protein Sp17">
    <location>
        <begin position="1"/>
        <end position="163"/>
    </location>
</feature>
<feature type="domain" description="IQ" evidence="2">
    <location>
        <begin position="114"/>
        <end position="143"/>
    </location>
</feature>
<feature type="region of interest" description="Disordered" evidence="3">
    <location>
        <begin position="57"/>
        <end position="115"/>
    </location>
</feature>
<feature type="region of interest" description="Disordered" evidence="3">
    <location>
        <begin position="129"/>
        <end position="163"/>
    </location>
</feature>
<feature type="compositionally biased region" description="Basic and acidic residues" evidence="3">
    <location>
        <begin position="62"/>
        <end position="98"/>
    </location>
</feature>
<feature type="compositionally biased region" description="Basic and acidic residues" evidence="3">
    <location>
        <begin position="129"/>
        <end position="139"/>
    </location>
</feature>
<feature type="compositionally biased region" description="Polar residues" evidence="3">
    <location>
        <begin position="153"/>
        <end position="163"/>
    </location>
</feature>